<proteinExistence type="inferred from homology"/>
<evidence type="ECO:0000255" key="1">
    <source>
        <dbReference type="HAMAP-Rule" id="MF_00318"/>
    </source>
</evidence>
<gene>
    <name evidence="1" type="primary">eno</name>
    <name type="ordered locus">PSPA7_1504</name>
</gene>
<organism>
    <name type="scientific">Pseudomonas paraeruginosa (strain DSM 24068 / PA7)</name>
    <name type="common">Pseudomonas aeruginosa (strain PA7)</name>
    <dbReference type="NCBI Taxonomy" id="381754"/>
    <lineage>
        <taxon>Bacteria</taxon>
        <taxon>Pseudomonadati</taxon>
        <taxon>Pseudomonadota</taxon>
        <taxon>Gammaproteobacteria</taxon>
        <taxon>Pseudomonadales</taxon>
        <taxon>Pseudomonadaceae</taxon>
        <taxon>Pseudomonas</taxon>
        <taxon>Pseudomonas paraeruginosa</taxon>
    </lineage>
</organism>
<accession>A6V1F3</accession>
<feature type="chain" id="PRO_1000019238" description="Enolase">
    <location>
        <begin position="1"/>
        <end position="429"/>
    </location>
</feature>
<feature type="active site" description="Proton donor" evidence="1">
    <location>
        <position position="209"/>
    </location>
</feature>
<feature type="active site" description="Proton acceptor" evidence="1">
    <location>
        <position position="341"/>
    </location>
</feature>
<feature type="binding site" evidence="1">
    <location>
        <position position="167"/>
    </location>
    <ligand>
        <name>(2R)-2-phosphoglycerate</name>
        <dbReference type="ChEBI" id="CHEBI:58289"/>
    </ligand>
</feature>
<feature type="binding site" evidence="1">
    <location>
        <position position="246"/>
    </location>
    <ligand>
        <name>Mg(2+)</name>
        <dbReference type="ChEBI" id="CHEBI:18420"/>
    </ligand>
</feature>
<feature type="binding site" evidence="1">
    <location>
        <position position="289"/>
    </location>
    <ligand>
        <name>Mg(2+)</name>
        <dbReference type="ChEBI" id="CHEBI:18420"/>
    </ligand>
</feature>
<feature type="binding site" evidence="1">
    <location>
        <position position="316"/>
    </location>
    <ligand>
        <name>Mg(2+)</name>
        <dbReference type="ChEBI" id="CHEBI:18420"/>
    </ligand>
</feature>
<feature type="binding site" evidence="1">
    <location>
        <position position="341"/>
    </location>
    <ligand>
        <name>(2R)-2-phosphoglycerate</name>
        <dbReference type="ChEBI" id="CHEBI:58289"/>
    </ligand>
</feature>
<feature type="binding site" evidence="1">
    <location>
        <position position="370"/>
    </location>
    <ligand>
        <name>(2R)-2-phosphoglycerate</name>
        <dbReference type="ChEBI" id="CHEBI:58289"/>
    </ligand>
</feature>
<feature type="binding site" evidence="1">
    <location>
        <position position="371"/>
    </location>
    <ligand>
        <name>(2R)-2-phosphoglycerate</name>
        <dbReference type="ChEBI" id="CHEBI:58289"/>
    </ligand>
</feature>
<feature type="binding site" evidence="1">
    <location>
        <position position="392"/>
    </location>
    <ligand>
        <name>(2R)-2-phosphoglycerate</name>
        <dbReference type="ChEBI" id="CHEBI:58289"/>
    </ligand>
</feature>
<comment type="function">
    <text evidence="1">Catalyzes the reversible conversion of 2-phosphoglycerate (2-PG) into phosphoenolpyruvate (PEP). It is essential for the degradation of carbohydrates via glycolysis.</text>
</comment>
<comment type="catalytic activity">
    <reaction evidence="1">
        <text>(2R)-2-phosphoglycerate = phosphoenolpyruvate + H2O</text>
        <dbReference type="Rhea" id="RHEA:10164"/>
        <dbReference type="ChEBI" id="CHEBI:15377"/>
        <dbReference type="ChEBI" id="CHEBI:58289"/>
        <dbReference type="ChEBI" id="CHEBI:58702"/>
        <dbReference type="EC" id="4.2.1.11"/>
    </reaction>
</comment>
<comment type="cofactor">
    <cofactor evidence="1">
        <name>Mg(2+)</name>
        <dbReference type="ChEBI" id="CHEBI:18420"/>
    </cofactor>
    <text evidence="1">Binds a second Mg(2+) ion via substrate during catalysis.</text>
</comment>
<comment type="pathway">
    <text evidence="1">Carbohydrate degradation; glycolysis; pyruvate from D-glyceraldehyde 3-phosphate: step 4/5.</text>
</comment>
<comment type="subunit">
    <text evidence="1">Component of the RNA degradosome, a multiprotein complex involved in RNA processing and mRNA degradation.</text>
</comment>
<comment type="subcellular location">
    <subcellularLocation>
        <location evidence="1">Cytoplasm</location>
    </subcellularLocation>
    <subcellularLocation>
        <location evidence="1">Secreted</location>
    </subcellularLocation>
    <subcellularLocation>
        <location evidence="1">Cell surface</location>
    </subcellularLocation>
    <text evidence="1">Fractions of enolase are present in both the cytoplasm and on the cell surface.</text>
</comment>
<comment type="similarity">
    <text evidence="1">Belongs to the enolase family.</text>
</comment>
<name>ENO_PSEP7</name>
<sequence>MAKIVDIKGREVLDSRGNPTVEADVILDNGIVGSACAPSGASTGSREALELRDGDKSRYLGKGVLKAVANINGPIRDLLLGKDAADQKALDHAMIELDGTENKAKLGANAILAVSLAAAKAAAQAKGVPLYAHIADLNGTPGQYSMPVPMMNIINGGEHADNNVDIQEFMVQPVGAKNFAEALRMGAEIFHHLKAVLKARGLNTAVGDEGGFAPNLSSNEDALAAIAEAVEKAGYKLGDDVTLALDCASSEFFKDGKYDLEGEGKVFDAAGFADYLAGLTQRYPIISIEDGMDESDWAGWKGLTDKIGAKVQLVGDDLFVTNTKILKEGIEKGIGNSILIKFNQIGSLTETLEAIQMAKAAGYTAVISHRSGETEDSTIADLAVGTAAGQIKTGSLCRSDRVSKYNQLLRIEEQLGAKAPYRGRAEFRG</sequence>
<reference key="1">
    <citation type="submission" date="2007-06" db="EMBL/GenBank/DDBJ databases">
        <authorList>
            <person name="Dodson R.J."/>
            <person name="Harkins D."/>
            <person name="Paulsen I.T."/>
        </authorList>
    </citation>
    <scope>NUCLEOTIDE SEQUENCE [LARGE SCALE GENOMIC DNA]</scope>
    <source>
        <strain>DSM 24068 / PA7</strain>
    </source>
</reference>
<protein>
    <recommendedName>
        <fullName evidence="1">Enolase</fullName>
        <ecNumber evidence="1">4.2.1.11</ecNumber>
    </recommendedName>
    <alternativeName>
        <fullName evidence="1">2-phospho-D-glycerate hydro-lyase</fullName>
    </alternativeName>
    <alternativeName>
        <fullName evidence="1">2-phosphoglycerate dehydratase</fullName>
    </alternativeName>
</protein>
<keyword id="KW-0963">Cytoplasm</keyword>
<keyword id="KW-0324">Glycolysis</keyword>
<keyword id="KW-0456">Lyase</keyword>
<keyword id="KW-0460">Magnesium</keyword>
<keyword id="KW-0479">Metal-binding</keyword>
<keyword id="KW-0964">Secreted</keyword>
<dbReference type="EC" id="4.2.1.11" evidence="1"/>
<dbReference type="EMBL" id="CP000744">
    <property type="protein sequence ID" value="ABR84068.1"/>
    <property type="molecule type" value="Genomic_DNA"/>
</dbReference>
<dbReference type="RefSeq" id="WP_003092364.1">
    <property type="nucleotide sequence ID" value="NC_009656.1"/>
</dbReference>
<dbReference type="SMR" id="A6V1F3"/>
<dbReference type="KEGG" id="pap:PSPA7_1504"/>
<dbReference type="HOGENOM" id="CLU_031223_2_1_6"/>
<dbReference type="UniPathway" id="UPA00109">
    <property type="reaction ID" value="UER00187"/>
</dbReference>
<dbReference type="Proteomes" id="UP000001582">
    <property type="component" value="Chromosome"/>
</dbReference>
<dbReference type="GO" id="GO:0009986">
    <property type="term" value="C:cell surface"/>
    <property type="evidence" value="ECO:0007669"/>
    <property type="project" value="UniProtKB-SubCell"/>
</dbReference>
<dbReference type="GO" id="GO:0005576">
    <property type="term" value="C:extracellular region"/>
    <property type="evidence" value="ECO:0007669"/>
    <property type="project" value="UniProtKB-SubCell"/>
</dbReference>
<dbReference type="GO" id="GO:0000015">
    <property type="term" value="C:phosphopyruvate hydratase complex"/>
    <property type="evidence" value="ECO:0007669"/>
    <property type="project" value="InterPro"/>
</dbReference>
<dbReference type="GO" id="GO:0000287">
    <property type="term" value="F:magnesium ion binding"/>
    <property type="evidence" value="ECO:0007669"/>
    <property type="project" value="UniProtKB-UniRule"/>
</dbReference>
<dbReference type="GO" id="GO:0004634">
    <property type="term" value="F:phosphopyruvate hydratase activity"/>
    <property type="evidence" value="ECO:0007669"/>
    <property type="project" value="UniProtKB-UniRule"/>
</dbReference>
<dbReference type="GO" id="GO:0006096">
    <property type="term" value="P:glycolytic process"/>
    <property type="evidence" value="ECO:0007669"/>
    <property type="project" value="UniProtKB-UniRule"/>
</dbReference>
<dbReference type="CDD" id="cd03313">
    <property type="entry name" value="enolase"/>
    <property type="match status" value="1"/>
</dbReference>
<dbReference type="FunFam" id="3.20.20.120:FF:000001">
    <property type="entry name" value="Enolase"/>
    <property type="match status" value="1"/>
</dbReference>
<dbReference type="FunFam" id="3.30.390.10:FF:000001">
    <property type="entry name" value="Enolase"/>
    <property type="match status" value="1"/>
</dbReference>
<dbReference type="Gene3D" id="3.20.20.120">
    <property type="entry name" value="Enolase-like C-terminal domain"/>
    <property type="match status" value="1"/>
</dbReference>
<dbReference type="Gene3D" id="3.30.390.10">
    <property type="entry name" value="Enolase-like, N-terminal domain"/>
    <property type="match status" value="1"/>
</dbReference>
<dbReference type="HAMAP" id="MF_00318">
    <property type="entry name" value="Enolase"/>
    <property type="match status" value="1"/>
</dbReference>
<dbReference type="InterPro" id="IPR000941">
    <property type="entry name" value="Enolase"/>
</dbReference>
<dbReference type="InterPro" id="IPR036849">
    <property type="entry name" value="Enolase-like_C_sf"/>
</dbReference>
<dbReference type="InterPro" id="IPR029017">
    <property type="entry name" value="Enolase-like_N"/>
</dbReference>
<dbReference type="InterPro" id="IPR020810">
    <property type="entry name" value="Enolase_C"/>
</dbReference>
<dbReference type="InterPro" id="IPR020809">
    <property type="entry name" value="Enolase_CS"/>
</dbReference>
<dbReference type="InterPro" id="IPR020811">
    <property type="entry name" value="Enolase_N"/>
</dbReference>
<dbReference type="NCBIfam" id="TIGR01060">
    <property type="entry name" value="eno"/>
    <property type="match status" value="1"/>
</dbReference>
<dbReference type="PANTHER" id="PTHR11902">
    <property type="entry name" value="ENOLASE"/>
    <property type="match status" value="1"/>
</dbReference>
<dbReference type="PANTHER" id="PTHR11902:SF1">
    <property type="entry name" value="ENOLASE"/>
    <property type="match status" value="1"/>
</dbReference>
<dbReference type="Pfam" id="PF00113">
    <property type="entry name" value="Enolase_C"/>
    <property type="match status" value="1"/>
</dbReference>
<dbReference type="Pfam" id="PF03952">
    <property type="entry name" value="Enolase_N"/>
    <property type="match status" value="1"/>
</dbReference>
<dbReference type="PIRSF" id="PIRSF001400">
    <property type="entry name" value="Enolase"/>
    <property type="match status" value="1"/>
</dbReference>
<dbReference type="PRINTS" id="PR00148">
    <property type="entry name" value="ENOLASE"/>
</dbReference>
<dbReference type="SFLD" id="SFLDS00001">
    <property type="entry name" value="Enolase"/>
    <property type="match status" value="1"/>
</dbReference>
<dbReference type="SFLD" id="SFLDF00002">
    <property type="entry name" value="enolase"/>
    <property type="match status" value="1"/>
</dbReference>
<dbReference type="SMART" id="SM01192">
    <property type="entry name" value="Enolase_C"/>
    <property type="match status" value="1"/>
</dbReference>
<dbReference type="SMART" id="SM01193">
    <property type="entry name" value="Enolase_N"/>
    <property type="match status" value="1"/>
</dbReference>
<dbReference type="SUPFAM" id="SSF51604">
    <property type="entry name" value="Enolase C-terminal domain-like"/>
    <property type="match status" value="1"/>
</dbReference>
<dbReference type="SUPFAM" id="SSF54826">
    <property type="entry name" value="Enolase N-terminal domain-like"/>
    <property type="match status" value="1"/>
</dbReference>
<dbReference type="PROSITE" id="PS00164">
    <property type="entry name" value="ENOLASE"/>
    <property type="match status" value="1"/>
</dbReference>